<protein>
    <recommendedName>
        <fullName evidence="4">Trifunctional purine biosynthetic protein adenosine-3</fullName>
    </recommendedName>
    <domain>
        <recommendedName>
            <fullName evidence="4">Phosphoribosylamine--glycine ligase</fullName>
            <ecNumber evidence="4">6.3.4.13</ecNumber>
        </recommendedName>
        <alternativeName>
            <fullName>Glycinamide ribonucleotide synthetase</fullName>
            <shortName>GARS</shortName>
        </alternativeName>
        <alternativeName>
            <fullName>Phosphoribosylglycinamide synthetase</fullName>
        </alternativeName>
    </domain>
    <domain>
        <recommendedName>
            <fullName evidence="4">Phosphoribosylformylglycinamidine cyclo-ligase</fullName>
            <ecNumber evidence="4">6.3.3.1</ecNumber>
        </recommendedName>
        <alternativeName>
            <fullName>AIR synthase</fullName>
            <shortName>AIRS</shortName>
        </alternativeName>
        <alternativeName>
            <fullName>Phosphoribosyl-aminoimidazole synthetase</fullName>
        </alternativeName>
    </domain>
    <domain>
        <recommendedName>
            <fullName evidence="4">Phosphoribosylglycinamide formyltransferase</fullName>
            <ecNumber evidence="4">2.1.2.2</ecNumber>
        </recommendedName>
        <alternativeName>
            <fullName>5'-phosphoribosylglycinamide transformylase</fullName>
        </alternativeName>
        <alternativeName>
            <fullName>GAR transformylase</fullName>
            <shortName>GART</shortName>
        </alternativeName>
    </domain>
</protein>
<feature type="initiator methionine" description="Removed" evidence="4">
    <location>
        <position position="1"/>
    </location>
</feature>
<feature type="chain" id="PRO_0000250715" description="Trifunctional purine biosynthetic protein adenosine-3">
    <location>
        <begin position="2"/>
        <end position="1010"/>
    </location>
</feature>
<feature type="domain" description="ATP-grasp" evidence="5">
    <location>
        <begin position="111"/>
        <end position="318"/>
    </location>
</feature>
<feature type="region of interest" description="AIRS domain" evidence="3">
    <location>
        <begin position="434"/>
        <end position="809"/>
    </location>
</feature>
<feature type="region of interest" description="GART domain" evidence="4">
    <location>
        <begin position="810"/>
        <end position="1010"/>
    </location>
</feature>
<feature type="active site" description="Proton donor" evidence="1">
    <location>
        <position position="915"/>
    </location>
</feature>
<feature type="binding site" evidence="4">
    <location>
        <begin position="190"/>
        <end position="193"/>
    </location>
    <ligand>
        <name>ATP</name>
        <dbReference type="ChEBI" id="CHEBI:30616"/>
    </ligand>
</feature>
<feature type="binding site" evidence="4">
    <location>
        <position position="197"/>
    </location>
    <ligand>
        <name>ATP</name>
        <dbReference type="ChEBI" id="CHEBI:30616"/>
    </ligand>
</feature>
<feature type="binding site" evidence="4">
    <location>
        <position position="220"/>
    </location>
    <ligand>
        <name>ATP</name>
        <dbReference type="ChEBI" id="CHEBI:30616"/>
    </ligand>
</feature>
<feature type="binding site" evidence="4">
    <location>
        <position position="229"/>
    </location>
    <ligand>
        <name>ATP</name>
        <dbReference type="ChEBI" id="CHEBI:30616"/>
    </ligand>
</feature>
<feature type="binding site" evidence="5">
    <location>
        <position position="288"/>
    </location>
    <ligand>
        <name>Mg(2+)</name>
        <dbReference type="ChEBI" id="CHEBI:18420"/>
    </ligand>
</feature>
<feature type="binding site" evidence="5">
    <location>
        <position position="290"/>
    </location>
    <ligand>
        <name>Mg(2+)</name>
        <dbReference type="ChEBI" id="CHEBI:18420"/>
    </ligand>
</feature>
<feature type="binding site" evidence="4">
    <location>
        <begin position="818"/>
        <end position="820"/>
    </location>
    <ligand>
        <name>N(1)-(5-phospho-beta-D-ribosyl)glycinamide</name>
        <dbReference type="ChEBI" id="CHEBI:143788"/>
    </ligand>
</feature>
<feature type="binding site" evidence="4">
    <location>
        <position position="871"/>
    </location>
    <ligand>
        <name>(6R)-10-formyltetrahydrofolate</name>
        <dbReference type="ChEBI" id="CHEBI:195366"/>
    </ligand>
</feature>
<feature type="binding site" evidence="4">
    <location>
        <begin position="896"/>
        <end position="899"/>
    </location>
    <ligand>
        <name>(6R)-10-formyltetrahydrofolate</name>
        <dbReference type="ChEBI" id="CHEBI:195366"/>
    </ligand>
</feature>
<feature type="binding site" evidence="4">
    <location>
        <position position="913"/>
    </location>
    <ligand>
        <name>(6R)-10-formyltetrahydrofolate</name>
        <dbReference type="ChEBI" id="CHEBI:195366"/>
    </ligand>
</feature>
<feature type="binding site" evidence="4">
    <location>
        <begin position="947"/>
        <end position="951"/>
    </location>
    <ligand>
        <name>(6R)-10-formyltetrahydrofolate</name>
        <dbReference type="ChEBI" id="CHEBI:195366"/>
    </ligand>
</feature>
<feature type="binding site" evidence="4">
    <location>
        <begin position="977"/>
        <end position="980"/>
    </location>
    <ligand>
        <name>N(1)-(5-phospho-beta-D-ribosyl)glycinamide</name>
        <dbReference type="ChEBI" id="CHEBI:143788"/>
    </ligand>
</feature>
<feature type="site" description="Raises pKa of active site His" evidence="1">
    <location>
        <position position="951"/>
    </location>
</feature>
<feature type="modified residue" description="N-acetylalanine" evidence="4">
    <location>
        <position position="2"/>
    </location>
</feature>
<feature type="modified residue" description="N6-acetyllysine" evidence="4">
    <location>
        <position position="350"/>
    </location>
</feature>
<feature type="modified residue" description="Phosphoserine" evidence="4">
    <location>
        <position position="440"/>
    </location>
</feature>
<feature type="modified residue" description="Phosphothreonine" evidence="4">
    <location>
        <position position="682"/>
    </location>
</feature>
<feature type="modified residue" description="Phosphoserine" evidence="4">
    <location>
        <position position="802"/>
    </location>
</feature>
<feature type="sequence variant" evidence="6">
    <original>K</original>
    <variation>E</variation>
    <location>
        <position position="771"/>
    </location>
</feature>
<dbReference type="EC" id="6.3.4.13" evidence="4"/>
<dbReference type="EC" id="6.3.3.1" evidence="4"/>
<dbReference type="EC" id="2.1.2.2" evidence="4"/>
<dbReference type="EMBL" id="AJ780930">
    <property type="protein sequence ID" value="CAG47113.1"/>
    <property type="molecule type" value="Genomic_DNA"/>
</dbReference>
<dbReference type="EMBL" id="BC122573">
    <property type="protein sequence ID" value="AAI22574.1"/>
    <property type="molecule type" value="mRNA"/>
</dbReference>
<dbReference type="RefSeq" id="NP_001035563.1">
    <property type="nucleotide sequence ID" value="NM_001040473.2"/>
</dbReference>
<dbReference type="RefSeq" id="XP_059741795.1">
    <property type="nucleotide sequence ID" value="XM_059885812.1"/>
</dbReference>
<dbReference type="RefSeq" id="XP_059741826.1">
    <property type="nucleotide sequence ID" value="XM_059885843.1"/>
</dbReference>
<dbReference type="SMR" id="Q59A32"/>
<dbReference type="FunCoup" id="Q59A32">
    <property type="interactions" value="4481"/>
</dbReference>
<dbReference type="STRING" id="9913.ENSBTAP00000012108"/>
<dbReference type="PaxDb" id="9913-ENSBTAP00000012108"/>
<dbReference type="PeptideAtlas" id="Q59A32"/>
<dbReference type="Ensembl" id="ENSBTAT00000012108.5">
    <property type="protein sequence ID" value="ENSBTAP00000012108.3"/>
    <property type="gene ID" value="ENSBTAG00000009188.6"/>
</dbReference>
<dbReference type="GeneID" id="281183"/>
<dbReference type="KEGG" id="bta:281183"/>
<dbReference type="CTD" id="2618"/>
<dbReference type="VEuPathDB" id="HostDB:ENSBTAG00000009188"/>
<dbReference type="VGNC" id="VGNC:29255">
    <property type="gene designation" value="GART"/>
</dbReference>
<dbReference type="eggNOG" id="KOG0237">
    <property type="taxonomic scope" value="Eukaryota"/>
</dbReference>
<dbReference type="eggNOG" id="KOG3076">
    <property type="taxonomic scope" value="Eukaryota"/>
</dbReference>
<dbReference type="GeneTree" id="ENSGT00390000000292"/>
<dbReference type="HOGENOM" id="CLU_005361_0_2_1"/>
<dbReference type="InParanoid" id="Q59A32"/>
<dbReference type="OMA" id="EVMQACC"/>
<dbReference type="OrthoDB" id="2018833at2759"/>
<dbReference type="TreeFam" id="TF106368"/>
<dbReference type="Reactome" id="R-BTA-73817">
    <property type="pathway name" value="Purine ribonucleoside monophosphate biosynthesis"/>
</dbReference>
<dbReference type="UniPathway" id="UPA00074">
    <property type="reaction ID" value="UER00125"/>
</dbReference>
<dbReference type="UniPathway" id="UPA00074">
    <property type="reaction ID" value="UER00126"/>
</dbReference>
<dbReference type="UniPathway" id="UPA00074">
    <property type="reaction ID" value="UER00129"/>
</dbReference>
<dbReference type="Proteomes" id="UP000009136">
    <property type="component" value="Chromosome 1"/>
</dbReference>
<dbReference type="Bgee" id="ENSBTAG00000009188">
    <property type="expression patterns" value="Expressed in conceptus and 107 other cell types or tissues"/>
</dbReference>
<dbReference type="GO" id="GO:0005829">
    <property type="term" value="C:cytosol"/>
    <property type="evidence" value="ECO:0000318"/>
    <property type="project" value="GO_Central"/>
</dbReference>
<dbReference type="GO" id="GO:0005524">
    <property type="term" value="F:ATP binding"/>
    <property type="evidence" value="ECO:0007669"/>
    <property type="project" value="UniProtKB-KW"/>
</dbReference>
<dbReference type="GO" id="GO:0046872">
    <property type="term" value="F:metal ion binding"/>
    <property type="evidence" value="ECO:0007669"/>
    <property type="project" value="UniProtKB-KW"/>
</dbReference>
<dbReference type="GO" id="GO:0004637">
    <property type="term" value="F:phosphoribosylamine-glycine ligase activity"/>
    <property type="evidence" value="ECO:0000318"/>
    <property type="project" value="GO_Central"/>
</dbReference>
<dbReference type="GO" id="GO:0004641">
    <property type="term" value="F:phosphoribosylformylglycinamidine cyclo-ligase activity"/>
    <property type="evidence" value="ECO:0000318"/>
    <property type="project" value="GO_Central"/>
</dbReference>
<dbReference type="GO" id="GO:0004644">
    <property type="term" value="F:phosphoribosylglycinamide formyltransferase activity"/>
    <property type="evidence" value="ECO:0007669"/>
    <property type="project" value="UniProtKB-EC"/>
</dbReference>
<dbReference type="GO" id="GO:0006189">
    <property type="term" value="P:'de novo' IMP biosynthetic process"/>
    <property type="evidence" value="ECO:0007669"/>
    <property type="project" value="UniProtKB-UniPathway"/>
</dbReference>
<dbReference type="GO" id="GO:0046084">
    <property type="term" value="P:adenine biosynthetic process"/>
    <property type="evidence" value="ECO:0000318"/>
    <property type="project" value="GO_Central"/>
</dbReference>
<dbReference type="GO" id="GO:0006164">
    <property type="term" value="P:purine nucleotide biosynthetic process"/>
    <property type="evidence" value="ECO:0000318"/>
    <property type="project" value="GO_Central"/>
</dbReference>
<dbReference type="CDD" id="cd08645">
    <property type="entry name" value="FMT_core_GART"/>
    <property type="match status" value="1"/>
</dbReference>
<dbReference type="CDD" id="cd02196">
    <property type="entry name" value="PurM"/>
    <property type="match status" value="1"/>
</dbReference>
<dbReference type="FunFam" id="3.40.50.20:FF:000006">
    <property type="entry name" value="Phosphoribosylamine--glycine ligase, chloroplastic"/>
    <property type="match status" value="1"/>
</dbReference>
<dbReference type="FunFam" id="3.30.1490.20:FF:000006">
    <property type="entry name" value="phosphoribosylamine--glycine ligase, chloroplastic-like"/>
    <property type="match status" value="1"/>
</dbReference>
<dbReference type="FunFam" id="3.30.1330.10:FF:000001">
    <property type="entry name" value="Phosphoribosylformylglycinamidine cyclo-ligase"/>
    <property type="match status" value="1"/>
</dbReference>
<dbReference type="FunFam" id="3.30.470.20:FF:000018">
    <property type="entry name" value="Trifunctional purine biosynthetic protein adenosine-3"/>
    <property type="match status" value="1"/>
</dbReference>
<dbReference type="FunFam" id="3.40.50.170:FF:000006">
    <property type="entry name" value="Trifunctional purine biosynthetic protein adenosine-3"/>
    <property type="match status" value="1"/>
</dbReference>
<dbReference type="FunFam" id="3.90.600.10:FF:000001">
    <property type="entry name" value="Trifunctional purine biosynthetic protein adenosine-3"/>
    <property type="match status" value="1"/>
</dbReference>
<dbReference type="FunFam" id="3.90.650.10:FF:000007">
    <property type="entry name" value="Trifunctional purine biosynthetic protein adenosine-3"/>
    <property type="match status" value="1"/>
</dbReference>
<dbReference type="Gene3D" id="3.40.50.20">
    <property type="match status" value="1"/>
</dbReference>
<dbReference type="Gene3D" id="3.30.1490.20">
    <property type="entry name" value="ATP-grasp fold, A domain"/>
    <property type="match status" value="1"/>
</dbReference>
<dbReference type="Gene3D" id="3.30.470.20">
    <property type="entry name" value="ATP-grasp fold, B domain"/>
    <property type="match status" value="1"/>
</dbReference>
<dbReference type="Gene3D" id="3.40.50.170">
    <property type="entry name" value="Formyl transferase, N-terminal domain"/>
    <property type="match status" value="1"/>
</dbReference>
<dbReference type="Gene3D" id="3.90.600.10">
    <property type="entry name" value="Phosphoribosylglycinamide synthetase, C-terminal domain"/>
    <property type="match status" value="1"/>
</dbReference>
<dbReference type="Gene3D" id="3.90.650.10">
    <property type="entry name" value="PurM-like C-terminal domain"/>
    <property type="match status" value="1"/>
</dbReference>
<dbReference type="Gene3D" id="3.30.1330.10">
    <property type="entry name" value="PurM-like, N-terminal domain"/>
    <property type="match status" value="1"/>
</dbReference>
<dbReference type="HAMAP" id="MF_00741">
    <property type="entry name" value="AIRS"/>
    <property type="match status" value="1"/>
</dbReference>
<dbReference type="HAMAP" id="MF_00138">
    <property type="entry name" value="GARS"/>
    <property type="match status" value="1"/>
</dbReference>
<dbReference type="HAMAP" id="MF_01930">
    <property type="entry name" value="PurN"/>
    <property type="match status" value="1"/>
</dbReference>
<dbReference type="InterPro" id="IPR011761">
    <property type="entry name" value="ATP-grasp"/>
</dbReference>
<dbReference type="InterPro" id="IPR013815">
    <property type="entry name" value="ATP_grasp_subdomain_1"/>
</dbReference>
<dbReference type="InterPro" id="IPR002376">
    <property type="entry name" value="Formyl_transf_N"/>
</dbReference>
<dbReference type="InterPro" id="IPR036477">
    <property type="entry name" value="Formyl_transf_N_sf"/>
</dbReference>
<dbReference type="InterPro" id="IPR004607">
    <property type="entry name" value="GART"/>
</dbReference>
<dbReference type="InterPro" id="IPR001555">
    <property type="entry name" value="GART_AS"/>
</dbReference>
<dbReference type="InterPro" id="IPR016185">
    <property type="entry name" value="PreATP-grasp_dom_sf"/>
</dbReference>
<dbReference type="InterPro" id="IPR020561">
    <property type="entry name" value="PRibGlycinamid_synth_ATP-grasp"/>
</dbReference>
<dbReference type="InterPro" id="IPR000115">
    <property type="entry name" value="PRibGlycinamide_synth"/>
</dbReference>
<dbReference type="InterPro" id="IPR020560">
    <property type="entry name" value="PRibGlycinamide_synth_C-dom"/>
</dbReference>
<dbReference type="InterPro" id="IPR037123">
    <property type="entry name" value="PRibGlycinamide_synth_C_sf"/>
</dbReference>
<dbReference type="InterPro" id="IPR020559">
    <property type="entry name" value="PRibGlycinamide_synth_CS"/>
</dbReference>
<dbReference type="InterPro" id="IPR020562">
    <property type="entry name" value="PRibGlycinamide_synth_N"/>
</dbReference>
<dbReference type="InterPro" id="IPR010918">
    <property type="entry name" value="PurM-like_C_dom"/>
</dbReference>
<dbReference type="InterPro" id="IPR036676">
    <property type="entry name" value="PurM-like_C_sf"/>
</dbReference>
<dbReference type="InterPro" id="IPR016188">
    <property type="entry name" value="PurM-like_N"/>
</dbReference>
<dbReference type="InterPro" id="IPR036921">
    <property type="entry name" value="PurM-like_N_sf"/>
</dbReference>
<dbReference type="InterPro" id="IPR004733">
    <property type="entry name" value="PurM_cligase"/>
</dbReference>
<dbReference type="InterPro" id="IPR011054">
    <property type="entry name" value="Rudment_hybrid_motif"/>
</dbReference>
<dbReference type="NCBIfam" id="TIGR00877">
    <property type="entry name" value="purD"/>
    <property type="match status" value="1"/>
</dbReference>
<dbReference type="NCBIfam" id="TIGR00878">
    <property type="entry name" value="purM"/>
    <property type="match status" value="1"/>
</dbReference>
<dbReference type="NCBIfam" id="TIGR00639">
    <property type="entry name" value="PurN"/>
    <property type="match status" value="1"/>
</dbReference>
<dbReference type="PANTHER" id="PTHR10520:SF12">
    <property type="entry name" value="TRIFUNCTIONAL PURINE BIOSYNTHETIC PROTEIN ADENOSINE-3"/>
    <property type="match status" value="1"/>
</dbReference>
<dbReference type="PANTHER" id="PTHR10520">
    <property type="entry name" value="TRIFUNCTIONAL PURINE BIOSYNTHETIC PROTEIN ADENOSINE-3-RELATED"/>
    <property type="match status" value="1"/>
</dbReference>
<dbReference type="Pfam" id="PF00586">
    <property type="entry name" value="AIRS"/>
    <property type="match status" value="1"/>
</dbReference>
<dbReference type="Pfam" id="PF02769">
    <property type="entry name" value="AIRS_C"/>
    <property type="match status" value="1"/>
</dbReference>
<dbReference type="Pfam" id="PF00551">
    <property type="entry name" value="Formyl_trans_N"/>
    <property type="match status" value="1"/>
</dbReference>
<dbReference type="Pfam" id="PF01071">
    <property type="entry name" value="GARS_A"/>
    <property type="match status" value="1"/>
</dbReference>
<dbReference type="Pfam" id="PF02843">
    <property type="entry name" value="GARS_C"/>
    <property type="match status" value="1"/>
</dbReference>
<dbReference type="Pfam" id="PF02844">
    <property type="entry name" value="GARS_N"/>
    <property type="match status" value="1"/>
</dbReference>
<dbReference type="SMART" id="SM01209">
    <property type="entry name" value="GARS_A"/>
    <property type="match status" value="1"/>
</dbReference>
<dbReference type="SMART" id="SM01210">
    <property type="entry name" value="GARS_C"/>
    <property type="match status" value="1"/>
</dbReference>
<dbReference type="SUPFAM" id="SSF53328">
    <property type="entry name" value="Formyltransferase"/>
    <property type="match status" value="1"/>
</dbReference>
<dbReference type="SUPFAM" id="SSF56059">
    <property type="entry name" value="Glutathione synthetase ATP-binding domain-like"/>
    <property type="match status" value="1"/>
</dbReference>
<dbReference type="SUPFAM" id="SSF52440">
    <property type="entry name" value="PreATP-grasp domain"/>
    <property type="match status" value="1"/>
</dbReference>
<dbReference type="SUPFAM" id="SSF56042">
    <property type="entry name" value="PurM C-terminal domain-like"/>
    <property type="match status" value="1"/>
</dbReference>
<dbReference type="SUPFAM" id="SSF55326">
    <property type="entry name" value="PurM N-terminal domain-like"/>
    <property type="match status" value="1"/>
</dbReference>
<dbReference type="SUPFAM" id="SSF51246">
    <property type="entry name" value="Rudiment single hybrid motif"/>
    <property type="match status" value="1"/>
</dbReference>
<dbReference type="PROSITE" id="PS50975">
    <property type="entry name" value="ATP_GRASP"/>
    <property type="match status" value="1"/>
</dbReference>
<dbReference type="PROSITE" id="PS00184">
    <property type="entry name" value="GARS"/>
    <property type="match status" value="1"/>
</dbReference>
<dbReference type="PROSITE" id="PS00373">
    <property type="entry name" value="GART"/>
    <property type="match status" value="1"/>
</dbReference>
<organism>
    <name type="scientific">Bos taurus</name>
    <name type="common">Bovine</name>
    <dbReference type="NCBI Taxonomy" id="9913"/>
    <lineage>
        <taxon>Eukaryota</taxon>
        <taxon>Metazoa</taxon>
        <taxon>Chordata</taxon>
        <taxon>Craniata</taxon>
        <taxon>Vertebrata</taxon>
        <taxon>Euteleostomi</taxon>
        <taxon>Mammalia</taxon>
        <taxon>Eutheria</taxon>
        <taxon>Laurasiatheria</taxon>
        <taxon>Artiodactyla</taxon>
        <taxon>Ruminantia</taxon>
        <taxon>Pecora</taxon>
        <taxon>Bovidae</taxon>
        <taxon>Bovinae</taxon>
        <taxon>Bos</taxon>
    </lineage>
</organism>
<gene>
    <name type="primary">GART</name>
</gene>
<comment type="function">
    <text evidence="4">Trifunctional enzyme that catalyzes three distinct reactions as part of the 'de novo' inosine monophosphate biosynthetic pathway.</text>
</comment>
<comment type="catalytic activity">
    <reaction evidence="4">
        <text>5-phospho-beta-D-ribosylamine + glycine + ATP = N(1)-(5-phospho-beta-D-ribosyl)glycinamide + ADP + phosphate + H(+)</text>
        <dbReference type="Rhea" id="RHEA:17453"/>
        <dbReference type="ChEBI" id="CHEBI:15378"/>
        <dbReference type="ChEBI" id="CHEBI:30616"/>
        <dbReference type="ChEBI" id="CHEBI:43474"/>
        <dbReference type="ChEBI" id="CHEBI:57305"/>
        <dbReference type="ChEBI" id="CHEBI:58681"/>
        <dbReference type="ChEBI" id="CHEBI:143788"/>
        <dbReference type="ChEBI" id="CHEBI:456216"/>
        <dbReference type="EC" id="6.3.4.13"/>
    </reaction>
    <physiologicalReaction direction="left-to-right" evidence="4">
        <dbReference type="Rhea" id="RHEA:17454"/>
    </physiologicalReaction>
</comment>
<comment type="catalytic activity">
    <reaction evidence="4">
        <text>2-formamido-N(1)-(5-O-phospho-beta-D-ribosyl)acetamidine + ATP = 5-amino-1-(5-phospho-beta-D-ribosyl)imidazole + ADP + phosphate + H(+)</text>
        <dbReference type="Rhea" id="RHEA:23032"/>
        <dbReference type="ChEBI" id="CHEBI:15378"/>
        <dbReference type="ChEBI" id="CHEBI:30616"/>
        <dbReference type="ChEBI" id="CHEBI:43474"/>
        <dbReference type="ChEBI" id="CHEBI:137981"/>
        <dbReference type="ChEBI" id="CHEBI:147287"/>
        <dbReference type="ChEBI" id="CHEBI:456216"/>
        <dbReference type="EC" id="6.3.3.1"/>
    </reaction>
    <physiologicalReaction direction="left-to-right" evidence="4">
        <dbReference type="Rhea" id="RHEA:23033"/>
    </physiologicalReaction>
</comment>
<comment type="catalytic activity">
    <reaction evidence="4">
        <text>N(1)-(5-phospho-beta-D-ribosyl)glycinamide + (6R)-10-formyltetrahydrofolate = N(2)-formyl-N(1)-(5-phospho-beta-D-ribosyl)glycinamide + (6S)-5,6,7,8-tetrahydrofolate + H(+)</text>
        <dbReference type="Rhea" id="RHEA:15053"/>
        <dbReference type="ChEBI" id="CHEBI:15378"/>
        <dbReference type="ChEBI" id="CHEBI:57453"/>
        <dbReference type="ChEBI" id="CHEBI:143788"/>
        <dbReference type="ChEBI" id="CHEBI:147286"/>
        <dbReference type="ChEBI" id="CHEBI:195366"/>
        <dbReference type="EC" id="2.1.2.2"/>
    </reaction>
    <physiologicalReaction direction="left-to-right" evidence="4">
        <dbReference type="Rhea" id="RHEA:15054"/>
    </physiologicalReaction>
</comment>
<comment type="cofactor">
    <cofactor evidence="2 5">
        <name>Mg(2+)</name>
        <dbReference type="ChEBI" id="CHEBI:18420"/>
    </cofactor>
    <cofactor evidence="5">
        <name>Mn(2+)</name>
        <dbReference type="ChEBI" id="CHEBI:29035"/>
    </cofactor>
    <text evidence="5">Binds 1 magnesium or manganese ion per subunit.</text>
</comment>
<comment type="pathway">
    <text evidence="4">Purine metabolism; IMP biosynthesis via de novo pathway; 5-amino-1-(5-phospho-D-ribosyl)imidazole from N(2)-formyl-N(1)-(5-phospho-D-ribosyl)glycinamide: step 2/2.</text>
</comment>
<comment type="pathway">
    <text evidence="4">Purine metabolism; IMP biosynthesis via de novo pathway; N(1)-(5-phospho-D-ribosyl)glycinamide from 5-phospho-alpha-D-ribose 1-diphosphate: step 2/2.</text>
</comment>
<comment type="pathway">
    <text evidence="4">Purine metabolism; IMP biosynthesis via de novo pathway; N(2)-formyl-N(1)-(5-phospho-D-ribosyl)glycinamide from N(1)-(5-phospho-D-ribosyl)glycinamide (10-formyl THF route): step 1/1.</text>
</comment>
<comment type="subunit">
    <text evidence="4">Homodimer.</text>
</comment>
<comment type="domain">
    <text evidence="4">The N-terminal ATP-grasp domain carries the phosphoribosylamine--glycine ligase activity.</text>
</comment>
<comment type="domain">
    <text evidence="4">The central AIRS domain carries the phosphoribosylformylglycinamidine cyclo-ligase activity.</text>
</comment>
<comment type="domain">
    <text evidence="4">The C-terminal GART domain carries the phosphoribosylglycinamide formyltransferase activity.</text>
</comment>
<comment type="similarity">
    <text evidence="7">In the N-terminal section; belongs to the GARS family.</text>
</comment>
<comment type="similarity">
    <text evidence="7">In the central section; belongs to the AIR synthase family.</text>
</comment>
<comment type="similarity">
    <text evidence="7">In the C-terminal section; belongs to the GART family.</text>
</comment>
<name>PUR2_BOVIN</name>
<proteinExistence type="evidence at transcript level"/>
<accession>Q59A32</accession>
<keyword id="KW-0007">Acetylation</keyword>
<keyword id="KW-0067">ATP-binding</keyword>
<keyword id="KW-0436">Ligase</keyword>
<keyword id="KW-0460">Magnesium</keyword>
<keyword id="KW-0464">Manganese</keyword>
<keyword id="KW-0479">Metal-binding</keyword>
<keyword id="KW-0511">Multifunctional enzyme</keyword>
<keyword id="KW-0547">Nucleotide-binding</keyword>
<keyword id="KW-0597">Phosphoprotein</keyword>
<keyword id="KW-0658">Purine biosynthesis</keyword>
<keyword id="KW-1185">Reference proteome</keyword>
<keyword id="KW-0808">Transferase</keyword>
<sequence>MAARVLVIGNGGREHTLAWKLAQSTHVKQVLVTPGNAGTACSEKISNTDISISDHTALAQFCKDEKIEFVVVGPEAPLAAGIVGNLNSVGVRCFGPTAQAAQLESSKRFAKEFMDRHGISTARWRAFTKPKEACDFIMSADFPALVVKASGLAAGKGVIVAKSKEEACEAVREIMQGKAFGEAGETVVIEELLEGEEVSCLCFTDGRTVAPMPPAQDHKRLLEGDEGPNTGGMGAYCPAPQVSKDLLLKIKNNILQRTVDGMQEEGMPYTGVLYAGIMLTKNGPKVLEFNCRFGDPECQVILPLLKSDLYEVIQSILDGLLCTSLPVWLDNCAAVTVVMASKGYPGDYTKGVEITGFPEAQALGLEVFQAGTALKDGKVVTNGGRVLTVTAIRENLISALEEARKGLAAIKFEGAVYRKDIGFRAIAFLQQPRGLTYKESGVDIAAGNMLVQKIKPLAKATSRPGCDVDLGGFAGLFDLKAAGFTDPLLACGTDGVGTKLKIAQQCSKHDTIGQDLVAMCVNDILAQGAEPLFFLDYFSCGKLDLRTTEAVITGIAKACKKAGCALLGGETAEMPDMYPPGEYDLAGFAVGAMERDQKLPQLERITEGDAVIGIASSGLHSNGFSLVRKIVAKSSLEYSSPAPGGCGDQTLGDLLLTPTKIYSRSLLPVLRSGRVKAVAHITGGGLLENIPRVLPQKLGVNLDAQTWRVPRIFSWLQQEGHLSEEEMARTFNCGIGAALVVSEDLVKQTLQDIEQHQEEACVIGRVVACPKGSPRVKVEHLIETMQINGSVLENGTLRNHFSVQPKKARVAVLISGTGSNLQALIDSTREPSSLAHIVIVISNKAAVAGLDKAEKAGIPTRVINHKLYKNRAAFDTAIDEVLEEFSTDIVCLAGFMRILSGPFVRKWNGKMLNIHPSLLPSFKGSNAHEQVLDAGVTVTGCTVHFVAEDVDAGQIILQEAVPVKRGDTVETLSERVKLAEHKIFPSALQLVASGAVRLGENGRICWVTED</sequence>
<reference key="1">
    <citation type="journal article" date="2005" name="Gene">
        <title>Molecular characterization and chromosomal assignment of the bovine glycinamide ribonucleotide formyltransferase (GART) gene on cattle chromosome 1q12.1-q12.2.</title>
        <authorList>
            <person name="Woehlke A."/>
            <person name="Droegemueller C."/>
            <person name="Kuiper H."/>
            <person name="Leeb T."/>
            <person name="Distl O."/>
        </authorList>
    </citation>
    <scope>NUCLEOTIDE SEQUENCE [GENOMIC DNA]</scope>
    <scope>VARIANT GLU-771</scope>
</reference>
<reference key="2">
    <citation type="submission" date="2006-08" db="EMBL/GenBank/DDBJ databases">
        <authorList>
            <consortium name="NIH - Mammalian Gene Collection (MGC) project"/>
        </authorList>
    </citation>
    <scope>NUCLEOTIDE SEQUENCE [LARGE SCALE MRNA]</scope>
    <source>
        <strain>Hereford</strain>
        <tissue>Uterus</tissue>
    </source>
</reference>
<evidence type="ECO:0000250" key="1">
    <source>
        <dbReference type="UniProtKB" id="P08179"/>
    </source>
</evidence>
<evidence type="ECO:0000250" key="2">
    <source>
        <dbReference type="UniProtKB" id="P15640"/>
    </source>
</evidence>
<evidence type="ECO:0000250" key="3">
    <source>
        <dbReference type="UniProtKB" id="P21872"/>
    </source>
</evidence>
<evidence type="ECO:0000250" key="4">
    <source>
        <dbReference type="UniProtKB" id="P22102"/>
    </source>
</evidence>
<evidence type="ECO:0000255" key="5">
    <source>
        <dbReference type="PROSITE-ProRule" id="PRU00409"/>
    </source>
</evidence>
<evidence type="ECO:0000269" key="6">
    <source>
    </source>
</evidence>
<evidence type="ECO:0000305" key="7"/>